<gene>
    <name evidence="1" type="primary">rplB</name>
    <name type="ordered locus">LCA_1761</name>
</gene>
<name>RL2_LATSS</name>
<proteinExistence type="inferred from homology"/>
<comment type="function">
    <text evidence="1">One of the primary rRNA binding proteins. Required for association of the 30S and 50S subunits to form the 70S ribosome, for tRNA binding and peptide bond formation. It has been suggested to have peptidyltransferase activity; this is somewhat controversial. Makes several contacts with the 16S rRNA in the 70S ribosome.</text>
</comment>
<comment type="subunit">
    <text evidence="1">Part of the 50S ribosomal subunit. Forms a bridge to the 30S subunit in the 70S ribosome.</text>
</comment>
<comment type="similarity">
    <text evidence="1">Belongs to the universal ribosomal protein uL2 family.</text>
</comment>
<reference key="1">
    <citation type="journal article" date="2005" name="Nat. Biotechnol.">
        <title>The complete genome sequence of the meat-borne lactic acid bacterium Lactobacillus sakei 23K.</title>
        <authorList>
            <person name="Chaillou S."/>
            <person name="Champomier-Verges M.-C."/>
            <person name="Cornet M."/>
            <person name="Crutz-Le Coq A.-M."/>
            <person name="Dudez A.-M."/>
            <person name="Martin V."/>
            <person name="Beaufils S."/>
            <person name="Darbon-Rongere E."/>
            <person name="Bossy R."/>
            <person name="Loux V."/>
            <person name="Zagorec M."/>
        </authorList>
    </citation>
    <scope>NUCLEOTIDE SEQUENCE [LARGE SCALE GENOMIC DNA]</scope>
    <source>
        <strain>23K</strain>
    </source>
</reference>
<protein>
    <recommendedName>
        <fullName evidence="1">Large ribosomal subunit protein uL2</fullName>
    </recommendedName>
    <alternativeName>
        <fullName evidence="3">50S ribosomal protein L2</fullName>
    </alternativeName>
</protein>
<sequence>MGIIKYKPTTNGRRNMTSSDFAEITKTTPEKTLLESQSHTAGRNAHGHITVRHRGGGHKQYYRVIDFKRIKDDIKATVKSIEYDPNRTSNIALIQYPDGIKAYIIAPKGLEVGMIVESGVNADIKVGNALPLANIPDGTLIHNIELKPGKGGQLVRSAGTSAQLLGKEGKYAIVRLTSGETRMILLTCRATVGTVGNGQHELIKIGKAGRKRWMGIRPTVRGSVMNPNDHPHGGGEGKAPIGRPSPMSPWGKKTLGKKTRSSKARSEKLIIRHRKSR</sequence>
<keyword id="KW-1185">Reference proteome</keyword>
<keyword id="KW-0687">Ribonucleoprotein</keyword>
<keyword id="KW-0689">Ribosomal protein</keyword>
<keyword id="KW-0694">RNA-binding</keyword>
<keyword id="KW-0699">rRNA-binding</keyword>
<evidence type="ECO:0000255" key="1">
    <source>
        <dbReference type="HAMAP-Rule" id="MF_01320"/>
    </source>
</evidence>
<evidence type="ECO:0000256" key="2">
    <source>
        <dbReference type="SAM" id="MobiDB-lite"/>
    </source>
</evidence>
<evidence type="ECO:0000305" key="3"/>
<organism>
    <name type="scientific">Latilactobacillus sakei subsp. sakei (strain 23K)</name>
    <name type="common">Lactobacillus sakei subsp. sakei</name>
    <dbReference type="NCBI Taxonomy" id="314315"/>
    <lineage>
        <taxon>Bacteria</taxon>
        <taxon>Bacillati</taxon>
        <taxon>Bacillota</taxon>
        <taxon>Bacilli</taxon>
        <taxon>Lactobacillales</taxon>
        <taxon>Lactobacillaceae</taxon>
        <taxon>Latilactobacillus</taxon>
    </lineage>
</organism>
<feature type="chain" id="PRO_0000237197" description="Large ribosomal subunit protein uL2">
    <location>
        <begin position="1"/>
        <end position="277"/>
    </location>
</feature>
<feature type="region of interest" description="Disordered" evidence="2">
    <location>
        <begin position="220"/>
        <end position="277"/>
    </location>
</feature>
<feature type="compositionally biased region" description="Basic residues" evidence="2">
    <location>
        <begin position="254"/>
        <end position="263"/>
    </location>
</feature>
<dbReference type="EMBL" id="CR936503">
    <property type="protein sequence ID" value="CAI56069.1"/>
    <property type="molecule type" value="Genomic_DNA"/>
</dbReference>
<dbReference type="RefSeq" id="WP_011375446.1">
    <property type="nucleotide sequence ID" value="NC_007576.1"/>
</dbReference>
<dbReference type="SMR" id="Q38UR5"/>
<dbReference type="STRING" id="314315.LCA_1761"/>
<dbReference type="GeneID" id="57132678"/>
<dbReference type="KEGG" id="lsa:LCA_1761"/>
<dbReference type="eggNOG" id="COG0090">
    <property type="taxonomic scope" value="Bacteria"/>
</dbReference>
<dbReference type="HOGENOM" id="CLU_036235_2_1_9"/>
<dbReference type="OrthoDB" id="9778722at2"/>
<dbReference type="Proteomes" id="UP000002707">
    <property type="component" value="Chromosome"/>
</dbReference>
<dbReference type="GO" id="GO:0015934">
    <property type="term" value="C:large ribosomal subunit"/>
    <property type="evidence" value="ECO:0007669"/>
    <property type="project" value="InterPro"/>
</dbReference>
<dbReference type="GO" id="GO:0019843">
    <property type="term" value="F:rRNA binding"/>
    <property type="evidence" value="ECO:0007669"/>
    <property type="project" value="UniProtKB-UniRule"/>
</dbReference>
<dbReference type="GO" id="GO:0003735">
    <property type="term" value="F:structural constituent of ribosome"/>
    <property type="evidence" value="ECO:0007669"/>
    <property type="project" value="InterPro"/>
</dbReference>
<dbReference type="GO" id="GO:0016740">
    <property type="term" value="F:transferase activity"/>
    <property type="evidence" value="ECO:0007669"/>
    <property type="project" value="InterPro"/>
</dbReference>
<dbReference type="GO" id="GO:0002181">
    <property type="term" value="P:cytoplasmic translation"/>
    <property type="evidence" value="ECO:0007669"/>
    <property type="project" value="TreeGrafter"/>
</dbReference>
<dbReference type="FunFam" id="2.30.30.30:FF:000001">
    <property type="entry name" value="50S ribosomal protein L2"/>
    <property type="match status" value="1"/>
</dbReference>
<dbReference type="FunFam" id="2.40.50.140:FF:000003">
    <property type="entry name" value="50S ribosomal protein L2"/>
    <property type="match status" value="1"/>
</dbReference>
<dbReference type="FunFam" id="4.10.950.10:FF:000001">
    <property type="entry name" value="50S ribosomal protein L2"/>
    <property type="match status" value="1"/>
</dbReference>
<dbReference type="Gene3D" id="2.30.30.30">
    <property type="match status" value="1"/>
</dbReference>
<dbReference type="Gene3D" id="2.40.50.140">
    <property type="entry name" value="Nucleic acid-binding proteins"/>
    <property type="match status" value="1"/>
</dbReference>
<dbReference type="Gene3D" id="4.10.950.10">
    <property type="entry name" value="Ribosomal protein L2, domain 3"/>
    <property type="match status" value="1"/>
</dbReference>
<dbReference type="HAMAP" id="MF_01320_B">
    <property type="entry name" value="Ribosomal_uL2_B"/>
    <property type="match status" value="1"/>
</dbReference>
<dbReference type="InterPro" id="IPR012340">
    <property type="entry name" value="NA-bd_OB-fold"/>
</dbReference>
<dbReference type="InterPro" id="IPR014722">
    <property type="entry name" value="Rib_uL2_dom2"/>
</dbReference>
<dbReference type="InterPro" id="IPR002171">
    <property type="entry name" value="Ribosomal_uL2"/>
</dbReference>
<dbReference type="InterPro" id="IPR005880">
    <property type="entry name" value="Ribosomal_uL2_bac/org-type"/>
</dbReference>
<dbReference type="InterPro" id="IPR022669">
    <property type="entry name" value="Ribosomal_uL2_C"/>
</dbReference>
<dbReference type="InterPro" id="IPR022671">
    <property type="entry name" value="Ribosomal_uL2_CS"/>
</dbReference>
<dbReference type="InterPro" id="IPR014726">
    <property type="entry name" value="Ribosomal_uL2_dom3"/>
</dbReference>
<dbReference type="InterPro" id="IPR022666">
    <property type="entry name" value="Ribosomal_uL2_RNA-bd_dom"/>
</dbReference>
<dbReference type="InterPro" id="IPR008991">
    <property type="entry name" value="Translation_prot_SH3-like_sf"/>
</dbReference>
<dbReference type="NCBIfam" id="TIGR01171">
    <property type="entry name" value="rplB_bact"/>
    <property type="match status" value="1"/>
</dbReference>
<dbReference type="PANTHER" id="PTHR13691:SF5">
    <property type="entry name" value="LARGE RIBOSOMAL SUBUNIT PROTEIN UL2M"/>
    <property type="match status" value="1"/>
</dbReference>
<dbReference type="PANTHER" id="PTHR13691">
    <property type="entry name" value="RIBOSOMAL PROTEIN L2"/>
    <property type="match status" value="1"/>
</dbReference>
<dbReference type="Pfam" id="PF00181">
    <property type="entry name" value="Ribosomal_L2"/>
    <property type="match status" value="1"/>
</dbReference>
<dbReference type="Pfam" id="PF03947">
    <property type="entry name" value="Ribosomal_L2_C"/>
    <property type="match status" value="1"/>
</dbReference>
<dbReference type="PIRSF" id="PIRSF002158">
    <property type="entry name" value="Ribosomal_L2"/>
    <property type="match status" value="1"/>
</dbReference>
<dbReference type="SMART" id="SM01383">
    <property type="entry name" value="Ribosomal_L2"/>
    <property type="match status" value="1"/>
</dbReference>
<dbReference type="SMART" id="SM01382">
    <property type="entry name" value="Ribosomal_L2_C"/>
    <property type="match status" value="1"/>
</dbReference>
<dbReference type="SUPFAM" id="SSF50249">
    <property type="entry name" value="Nucleic acid-binding proteins"/>
    <property type="match status" value="1"/>
</dbReference>
<dbReference type="SUPFAM" id="SSF50104">
    <property type="entry name" value="Translation proteins SH3-like domain"/>
    <property type="match status" value="1"/>
</dbReference>
<dbReference type="PROSITE" id="PS00467">
    <property type="entry name" value="RIBOSOMAL_L2"/>
    <property type="match status" value="1"/>
</dbReference>
<accession>Q38UR5</accession>